<proteinExistence type="inferred from homology"/>
<organism>
    <name type="scientific">Clostridium acetobutylicum (strain ATCC 824 / DSM 792 / JCM 1419 / IAM 19013 / LMG 5710 / NBRC 13948 / NRRL B-527 / VKM B-1787 / 2291 / W)</name>
    <dbReference type="NCBI Taxonomy" id="272562"/>
    <lineage>
        <taxon>Bacteria</taxon>
        <taxon>Bacillati</taxon>
        <taxon>Bacillota</taxon>
        <taxon>Clostridia</taxon>
        <taxon>Eubacteriales</taxon>
        <taxon>Clostridiaceae</taxon>
        <taxon>Clostridium</taxon>
    </lineage>
</organism>
<comment type="function">
    <text evidence="1">The key enzymatic reactions in nitrogen fixation are catalyzed by the nitrogenase complex, which has 2 components: the iron protein and the molybdenum-iron protein.</text>
</comment>
<comment type="catalytic activity">
    <reaction evidence="1">
        <text>N2 + 8 reduced [2Fe-2S]-[ferredoxin] + 16 ATP + 16 H2O = H2 + 8 oxidized [2Fe-2S]-[ferredoxin] + 2 NH4(+) + 16 ADP + 16 phosphate + 6 H(+)</text>
        <dbReference type="Rhea" id="RHEA:21448"/>
        <dbReference type="Rhea" id="RHEA-COMP:10000"/>
        <dbReference type="Rhea" id="RHEA-COMP:10001"/>
        <dbReference type="ChEBI" id="CHEBI:15377"/>
        <dbReference type="ChEBI" id="CHEBI:15378"/>
        <dbReference type="ChEBI" id="CHEBI:17997"/>
        <dbReference type="ChEBI" id="CHEBI:18276"/>
        <dbReference type="ChEBI" id="CHEBI:28938"/>
        <dbReference type="ChEBI" id="CHEBI:30616"/>
        <dbReference type="ChEBI" id="CHEBI:33737"/>
        <dbReference type="ChEBI" id="CHEBI:33738"/>
        <dbReference type="ChEBI" id="CHEBI:43474"/>
        <dbReference type="ChEBI" id="CHEBI:456216"/>
        <dbReference type="EC" id="1.18.6.1"/>
    </reaction>
</comment>
<comment type="cofactor">
    <cofactor evidence="1">
        <name>[4Fe-4S] cluster</name>
        <dbReference type="ChEBI" id="CHEBI:49883"/>
    </cofactor>
    <text evidence="1">Binds 1 [4Fe-4S] cluster per dimer.</text>
</comment>
<comment type="subunit">
    <text evidence="1">Homodimer.</text>
</comment>
<comment type="PTM">
    <text evidence="1">The reversible ADP-ribosylation of Arg-97 inactivates the nitrogenase reductase and regulates nitrogenase activity.</text>
</comment>
<comment type="similarity">
    <text evidence="1">Belongs to the NifH/BchL/ChlL family.</text>
</comment>
<feature type="chain" id="PRO_0000139496" description="Nitrogenase iron protein">
    <location>
        <begin position="1"/>
        <end position="272"/>
    </location>
</feature>
<feature type="binding site" evidence="1">
    <location>
        <begin position="8"/>
        <end position="15"/>
    </location>
    <ligand>
        <name>ATP</name>
        <dbReference type="ChEBI" id="CHEBI:30616"/>
    </ligand>
</feature>
<feature type="binding site" evidence="1">
    <location>
        <position position="94"/>
    </location>
    <ligand>
        <name>[4Fe-4S] cluster</name>
        <dbReference type="ChEBI" id="CHEBI:49883"/>
        <note>ligand shared between dimeric partners</note>
    </ligand>
</feature>
<feature type="binding site" evidence="1">
    <location>
        <position position="129"/>
    </location>
    <ligand>
        <name>[4Fe-4S] cluster</name>
        <dbReference type="ChEBI" id="CHEBI:49883"/>
        <note>ligand shared between dimeric partners</note>
    </ligand>
</feature>
<feature type="modified residue" description="ADP-ribosylarginine; by dinitrogenase reductase ADP-ribosyltransferase" evidence="1">
    <location>
        <position position="97"/>
    </location>
</feature>
<name>NIFH_CLOAB</name>
<reference key="1">
    <citation type="journal article" date="2001" name="J. Bacteriol.">
        <title>Genome sequence and comparative analysis of the solvent-producing bacterium Clostridium acetobutylicum.</title>
        <authorList>
            <person name="Noelling J."/>
            <person name="Breton G."/>
            <person name="Omelchenko M.V."/>
            <person name="Makarova K.S."/>
            <person name="Zeng Q."/>
            <person name="Gibson R."/>
            <person name="Lee H.M."/>
            <person name="Dubois J."/>
            <person name="Qiu D."/>
            <person name="Hitti J."/>
            <person name="Wolf Y.I."/>
            <person name="Tatusov R.L."/>
            <person name="Sabathe F."/>
            <person name="Doucette-Stamm L.A."/>
            <person name="Soucaille P."/>
            <person name="Daly M.J."/>
            <person name="Bennett G.N."/>
            <person name="Koonin E.V."/>
            <person name="Smith D.R."/>
        </authorList>
    </citation>
    <scope>NUCLEOTIDE SEQUENCE [LARGE SCALE GENOMIC DNA]</scope>
    <source>
        <strain>ATCC 824 / DSM 792 / JCM 1419 / IAM 19013 / LMG 5710 / NBRC 13948 / NRRL B-527 / VKM B-1787 / 2291 / W</strain>
    </source>
</reference>
<accession>Q97ME5</accession>
<evidence type="ECO:0000255" key="1">
    <source>
        <dbReference type="HAMAP-Rule" id="MF_00533"/>
    </source>
</evidence>
<keyword id="KW-0004">4Fe-4S</keyword>
<keyword id="KW-0013">ADP-ribosylation</keyword>
<keyword id="KW-0067">ATP-binding</keyword>
<keyword id="KW-0408">Iron</keyword>
<keyword id="KW-0411">Iron-sulfur</keyword>
<keyword id="KW-0479">Metal-binding</keyword>
<keyword id="KW-0535">Nitrogen fixation</keyword>
<keyword id="KW-0547">Nucleotide-binding</keyword>
<keyword id="KW-0560">Oxidoreductase</keyword>
<keyword id="KW-1185">Reference proteome</keyword>
<gene>
    <name evidence="1" type="primary">nifH</name>
    <name type="ordered locus">CA_C0253</name>
</gene>
<sequence>MRQVAIYGKGGIGKSTTTQNLTSGLAELGKKIMVVGCDPKADSTRLLLGGLAQKTVLDTLREEGEDVDLDTIMKTGFGNIKCVESGGPEPGVGCAGRGIITSINMLEQLGAYEDELDYVFYDVLGDVVCGGFAMPIREGKAKEIYIVASGEMMAMYAANNISKGISKFANTGGVRLGGIICNSRKVKNEKELLEAFAKELGTQLIYFVPRSHEVQKAEINKQTVIQFNPKDEQADEYRALAKAIDGNDMYVVPKPMAQDKLEAILMEYGLLE</sequence>
<dbReference type="EC" id="1.18.6.1" evidence="1"/>
<dbReference type="EMBL" id="AE001437">
    <property type="protein sequence ID" value="AAK78234.1"/>
    <property type="molecule type" value="Genomic_DNA"/>
</dbReference>
<dbReference type="PIR" id="G96930">
    <property type="entry name" value="G96930"/>
</dbReference>
<dbReference type="RefSeq" id="NP_346894.1">
    <property type="nucleotide sequence ID" value="NC_003030.1"/>
</dbReference>
<dbReference type="RefSeq" id="WP_010963576.1">
    <property type="nucleotide sequence ID" value="NC_003030.1"/>
</dbReference>
<dbReference type="SMR" id="Q97ME5"/>
<dbReference type="STRING" id="272562.CA_C0253"/>
<dbReference type="GeneID" id="44996749"/>
<dbReference type="KEGG" id="cac:CA_C0253"/>
<dbReference type="PATRIC" id="fig|272562.8.peg.438"/>
<dbReference type="eggNOG" id="COG1348">
    <property type="taxonomic scope" value="Bacteria"/>
</dbReference>
<dbReference type="HOGENOM" id="CLU_059373_0_0_9"/>
<dbReference type="OrthoDB" id="9778641at2"/>
<dbReference type="Proteomes" id="UP000000814">
    <property type="component" value="Chromosome"/>
</dbReference>
<dbReference type="GO" id="GO:0051539">
    <property type="term" value="F:4 iron, 4 sulfur cluster binding"/>
    <property type="evidence" value="ECO:0007669"/>
    <property type="project" value="UniProtKB-KW"/>
</dbReference>
<dbReference type="GO" id="GO:0005524">
    <property type="term" value="F:ATP binding"/>
    <property type="evidence" value="ECO:0007669"/>
    <property type="project" value="UniProtKB-UniRule"/>
</dbReference>
<dbReference type="GO" id="GO:0046872">
    <property type="term" value="F:metal ion binding"/>
    <property type="evidence" value="ECO:0007669"/>
    <property type="project" value="UniProtKB-KW"/>
</dbReference>
<dbReference type="GO" id="GO:0016163">
    <property type="term" value="F:nitrogenase activity"/>
    <property type="evidence" value="ECO:0007669"/>
    <property type="project" value="UniProtKB-UniRule"/>
</dbReference>
<dbReference type="GO" id="GO:0009399">
    <property type="term" value="P:nitrogen fixation"/>
    <property type="evidence" value="ECO:0007669"/>
    <property type="project" value="UniProtKB-UniRule"/>
</dbReference>
<dbReference type="CDD" id="cd02040">
    <property type="entry name" value="NifH"/>
    <property type="match status" value="1"/>
</dbReference>
<dbReference type="Gene3D" id="3.40.50.300">
    <property type="entry name" value="P-loop containing nucleotide triphosphate hydrolases"/>
    <property type="match status" value="1"/>
</dbReference>
<dbReference type="HAMAP" id="MF_00533">
    <property type="entry name" value="NifH"/>
    <property type="match status" value="1"/>
</dbReference>
<dbReference type="InterPro" id="IPR030655">
    <property type="entry name" value="NifH/chlL_CS"/>
</dbReference>
<dbReference type="InterPro" id="IPR000392">
    <property type="entry name" value="NifH/frxC"/>
</dbReference>
<dbReference type="InterPro" id="IPR005977">
    <property type="entry name" value="Nitrogenase_Fe_NifH"/>
</dbReference>
<dbReference type="InterPro" id="IPR027417">
    <property type="entry name" value="P-loop_NTPase"/>
</dbReference>
<dbReference type="NCBIfam" id="TIGR01287">
    <property type="entry name" value="nifH"/>
    <property type="match status" value="1"/>
</dbReference>
<dbReference type="PANTHER" id="PTHR42864">
    <property type="entry name" value="LIGHT-INDEPENDENT PROTOCHLOROPHYLLIDE REDUCTASE IRON-SULFUR ATP-BINDING PROTEIN"/>
    <property type="match status" value="1"/>
</dbReference>
<dbReference type="PANTHER" id="PTHR42864:SF2">
    <property type="entry name" value="LIGHT-INDEPENDENT PROTOCHLOROPHYLLIDE REDUCTASE IRON-SULFUR ATP-BINDING PROTEIN"/>
    <property type="match status" value="1"/>
</dbReference>
<dbReference type="Pfam" id="PF00142">
    <property type="entry name" value="Fer4_NifH"/>
    <property type="match status" value="1"/>
</dbReference>
<dbReference type="PIRSF" id="PIRSF000363">
    <property type="entry name" value="Nitrogenase_iron"/>
    <property type="match status" value="1"/>
</dbReference>
<dbReference type="PRINTS" id="PR00091">
    <property type="entry name" value="NITROGNASEII"/>
</dbReference>
<dbReference type="SUPFAM" id="SSF52540">
    <property type="entry name" value="P-loop containing nucleoside triphosphate hydrolases"/>
    <property type="match status" value="1"/>
</dbReference>
<dbReference type="PROSITE" id="PS00746">
    <property type="entry name" value="NIFH_FRXC_1"/>
    <property type="match status" value="1"/>
</dbReference>
<dbReference type="PROSITE" id="PS00692">
    <property type="entry name" value="NIFH_FRXC_2"/>
    <property type="match status" value="1"/>
</dbReference>
<dbReference type="PROSITE" id="PS51026">
    <property type="entry name" value="NIFH_FRXC_3"/>
    <property type="match status" value="1"/>
</dbReference>
<protein>
    <recommendedName>
        <fullName evidence="1">Nitrogenase iron protein</fullName>
        <ecNumber evidence="1">1.18.6.1</ecNumber>
    </recommendedName>
    <alternativeName>
        <fullName evidence="1">Nitrogenase Fe protein</fullName>
    </alternativeName>
    <alternativeName>
        <fullName evidence="1">Nitrogenase component II</fullName>
    </alternativeName>
    <alternativeName>
        <fullName evidence="1">Nitrogenase reductase</fullName>
    </alternativeName>
</protein>